<proteinExistence type="evidence at protein level"/>
<sequence length="307" mass="35258">MNNDTSKKLGTLVSDDGPVNVYVWDMDETLILLRSLLNGTYAESFNGSKDVKRGVEIGRMWEKHILKICDDFFFYEQVEECNEPFLDSLRQYDDGKDLSRYEFKQDDFSTPTDDLNKRKLAYRHRAVAERYEKGLCPFIDSESMSGLDELYNVTDEYTDRWLSSARAFLEQCSCVEESSDGTSAIEQSSQDIHILVTSGALIPSLVKCLLFRLDTFLRHENVYSSIDVGKLQCFKWIKERFNHPKFRFCAIGDGWEECAAAQALQWPFVKIDLQPDSSHRFPGLTPKTVSYYFAAVYGNSDADSSKE</sequence>
<organism>
    <name type="scientific">Arabidopsis thaliana</name>
    <name type="common">Mouse-ear cress</name>
    <dbReference type="NCBI Taxonomy" id="3702"/>
    <lineage>
        <taxon>Eukaryota</taxon>
        <taxon>Viridiplantae</taxon>
        <taxon>Streptophyta</taxon>
        <taxon>Embryophyta</taxon>
        <taxon>Tracheophyta</taxon>
        <taxon>Spermatophyta</taxon>
        <taxon>Magnoliopsida</taxon>
        <taxon>eudicotyledons</taxon>
        <taxon>Gunneridae</taxon>
        <taxon>Pentapetalae</taxon>
        <taxon>rosids</taxon>
        <taxon>malvids</taxon>
        <taxon>Brassicales</taxon>
        <taxon>Brassicaceae</taxon>
        <taxon>Camelineae</taxon>
        <taxon>Arabidopsis</taxon>
    </lineage>
</organism>
<keyword id="KW-0378">Hydrolase</keyword>
<keyword id="KW-0460">Magnesium</keyword>
<keyword id="KW-0479">Metal-binding</keyword>
<keyword id="KW-0904">Protein phosphatase</keyword>
<keyword id="KW-1185">Reference proteome</keyword>
<gene>
    <name evidence="3" type="primary">EYA</name>
    <name evidence="6" type="ordered locus">At2g35320</name>
</gene>
<reference key="1">
    <citation type="journal article" date="1999" name="Nature">
        <title>Sequence and analysis of chromosome 2 of the plant Arabidopsis thaliana.</title>
        <authorList>
            <person name="Lin X."/>
            <person name="Kaul S."/>
            <person name="Rounsley S.D."/>
            <person name="Shea T.P."/>
            <person name="Benito M.-I."/>
            <person name="Town C.D."/>
            <person name="Fujii C.Y."/>
            <person name="Mason T.M."/>
            <person name="Bowman C.L."/>
            <person name="Barnstead M.E."/>
            <person name="Feldblyum T.V."/>
            <person name="Buell C.R."/>
            <person name="Ketchum K.A."/>
            <person name="Lee J.J."/>
            <person name="Ronning C.M."/>
            <person name="Koo H.L."/>
            <person name="Moffat K.S."/>
            <person name="Cronin L.A."/>
            <person name="Shen M."/>
            <person name="Pai G."/>
            <person name="Van Aken S."/>
            <person name="Umayam L."/>
            <person name="Tallon L.J."/>
            <person name="Gill J.E."/>
            <person name="Adams M.D."/>
            <person name="Carrera A.J."/>
            <person name="Creasy T.H."/>
            <person name="Goodman H.M."/>
            <person name="Somerville C.R."/>
            <person name="Copenhaver G.P."/>
            <person name="Preuss D."/>
            <person name="Nierman W.C."/>
            <person name="White O."/>
            <person name="Eisen J.A."/>
            <person name="Salzberg S.L."/>
            <person name="Fraser C.M."/>
            <person name="Venter J.C."/>
        </authorList>
    </citation>
    <scope>NUCLEOTIDE SEQUENCE [LARGE SCALE GENOMIC DNA]</scope>
    <source>
        <strain>cv. Columbia</strain>
    </source>
</reference>
<reference key="2">
    <citation type="journal article" date="2017" name="Plant J.">
        <title>Araport11: a complete reannotation of the Arabidopsis thaliana reference genome.</title>
        <authorList>
            <person name="Cheng C.Y."/>
            <person name="Krishnakumar V."/>
            <person name="Chan A.P."/>
            <person name="Thibaud-Nissen F."/>
            <person name="Schobel S."/>
            <person name="Town C.D."/>
        </authorList>
    </citation>
    <scope>GENOME REANNOTATION</scope>
    <source>
        <strain>cv. Columbia</strain>
    </source>
</reference>
<reference key="3">
    <citation type="journal article" date="2003" name="Science">
        <title>Empirical analysis of transcriptional activity in the Arabidopsis genome.</title>
        <authorList>
            <person name="Yamada K."/>
            <person name="Lim J."/>
            <person name="Dale J.M."/>
            <person name="Chen H."/>
            <person name="Shinn P."/>
            <person name="Palm C.J."/>
            <person name="Southwick A.M."/>
            <person name="Wu H.C."/>
            <person name="Kim C.J."/>
            <person name="Nguyen M."/>
            <person name="Pham P.K."/>
            <person name="Cheuk R.F."/>
            <person name="Karlin-Newmann G."/>
            <person name="Liu S.X."/>
            <person name="Lam B."/>
            <person name="Sakano H."/>
            <person name="Wu T."/>
            <person name="Yu G."/>
            <person name="Miranda M."/>
            <person name="Quach H.L."/>
            <person name="Tripp M."/>
            <person name="Chang C.H."/>
            <person name="Lee J.M."/>
            <person name="Toriumi M.J."/>
            <person name="Chan M.M."/>
            <person name="Tang C.C."/>
            <person name="Onodera C.S."/>
            <person name="Deng J.M."/>
            <person name="Akiyama K."/>
            <person name="Ansari Y."/>
            <person name="Arakawa T."/>
            <person name="Banh J."/>
            <person name="Banno F."/>
            <person name="Bowser L."/>
            <person name="Brooks S.Y."/>
            <person name="Carninci P."/>
            <person name="Chao Q."/>
            <person name="Choy N."/>
            <person name="Enju A."/>
            <person name="Goldsmith A.D."/>
            <person name="Gurjal M."/>
            <person name="Hansen N.F."/>
            <person name="Hayashizaki Y."/>
            <person name="Johnson-Hopson C."/>
            <person name="Hsuan V.W."/>
            <person name="Iida K."/>
            <person name="Karnes M."/>
            <person name="Khan S."/>
            <person name="Koesema E."/>
            <person name="Ishida J."/>
            <person name="Jiang P.X."/>
            <person name="Jones T."/>
            <person name="Kawai J."/>
            <person name="Kamiya A."/>
            <person name="Meyers C."/>
            <person name="Nakajima M."/>
            <person name="Narusaka M."/>
            <person name="Seki M."/>
            <person name="Sakurai T."/>
            <person name="Satou M."/>
            <person name="Tamse R."/>
            <person name="Vaysberg M."/>
            <person name="Wallender E.K."/>
            <person name="Wong C."/>
            <person name="Yamamura Y."/>
            <person name="Yuan S."/>
            <person name="Shinozaki K."/>
            <person name="Davis R.W."/>
            <person name="Theologis A."/>
            <person name="Ecker J.R."/>
        </authorList>
    </citation>
    <scope>NUCLEOTIDE SEQUENCE [LARGE SCALE MRNA]</scope>
    <source>
        <strain>cv. Columbia</strain>
    </source>
</reference>
<reference key="4">
    <citation type="submission" date="2002-03" db="EMBL/GenBank/DDBJ databases">
        <title>Full-length cDNA from Arabidopsis thaliana.</title>
        <authorList>
            <person name="Brover V.V."/>
            <person name="Troukhan M.E."/>
            <person name="Alexandrov N.A."/>
            <person name="Lu Y.-P."/>
            <person name="Flavell R.B."/>
            <person name="Feldmann K.A."/>
        </authorList>
    </citation>
    <scope>NUCLEOTIDE SEQUENCE [LARGE SCALE MRNA]</scope>
</reference>
<reference key="5">
    <citation type="journal article" date="2005" name="Biochemistry">
        <title>Characterization of a plant, tyrosine-specific phosphatase of the aspartyl class.</title>
        <authorList>
            <person name="Rayapureddi J.P."/>
            <person name="Kattamuri C."/>
            <person name="Chan F.H."/>
            <person name="Hegde R.S."/>
        </authorList>
    </citation>
    <scope>FUNCTION</scope>
    <scope>COFACTOR</scope>
    <scope>ACTIVITY REGULATION</scope>
    <scope>BIOPHYSICOCHEMICAL PROPERTIES</scope>
    <scope>ACTIVE SITE</scope>
    <scope>MUTAGENESIS OF 1-MET--ASP-15; ASP-25; ASP-27; THR-29; THR-197; GLY-252; ASP-253 AND GLU-257</scope>
</reference>
<reference key="6">
    <citation type="journal article" date="2008" name="ChemBioChem">
        <title>Eyes absent proteins: characterization of substrate specificity and phosphatase activity of mutants associated with branchial, otic and renal anomalies.</title>
        <authorList>
            <person name="Musharraf A."/>
            <person name="Markschies N."/>
            <person name="Teichmann K."/>
            <person name="Pankratz S."/>
            <person name="Landgraf K."/>
            <person name="Englert C."/>
            <person name="Imhof D."/>
        </authorList>
    </citation>
    <scope>FUNCTION</scope>
    <scope>CATALYTIC ACTIVITY</scope>
</reference>
<name>EYA_ARATH</name>
<evidence type="ECO:0000269" key="1">
    <source>
    </source>
</evidence>
<evidence type="ECO:0000269" key="2">
    <source>
    </source>
</evidence>
<evidence type="ECO:0000303" key="3">
    <source>
    </source>
</evidence>
<evidence type="ECO:0000305" key="4"/>
<evidence type="ECO:0000305" key="5">
    <source>
    </source>
</evidence>
<evidence type="ECO:0000312" key="6">
    <source>
        <dbReference type="Araport" id="AT2G35320"/>
    </source>
</evidence>
<protein>
    <recommendedName>
        <fullName evidence="4">Protein phosphatase EYA</fullName>
        <ecNumber evidence="2">3.1.3.48</ecNumber>
    </recommendedName>
    <alternativeName>
        <fullName evidence="3">Eyes absent homolog</fullName>
        <shortName evidence="3">AtEYA</shortName>
    </alternativeName>
</protein>
<dbReference type="EC" id="3.1.3.48" evidence="2"/>
<dbReference type="EMBL" id="AC004667">
    <property type="protein sequence ID" value="AAC61806.2"/>
    <property type="molecule type" value="Genomic_DNA"/>
</dbReference>
<dbReference type="EMBL" id="CP002685">
    <property type="protein sequence ID" value="AEC09093.1"/>
    <property type="molecule type" value="Genomic_DNA"/>
</dbReference>
<dbReference type="EMBL" id="AF410332">
    <property type="protein sequence ID" value="AAK95318.1"/>
    <property type="molecule type" value="mRNA"/>
</dbReference>
<dbReference type="EMBL" id="AY054555">
    <property type="protein sequence ID" value="AAK96746.1"/>
    <property type="molecule type" value="mRNA"/>
</dbReference>
<dbReference type="EMBL" id="AY064618">
    <property type="protein sequence ID" value="AAL47332.1"/>
    <property type="molecule type" value="mRNA"/>
</dbReference>
<dbReference type="EMBL" id="AY149930">
    <property type="protein sequence ID" value="AAN31084.1"/>
    <property type="molecule type" value="mRNA"/>
</dbReference>
<dbReference type="EMBL" id="AY087608">
    <property type="protein sequence ID" value="AAM65149.1"/>
    <property type="molecule type" value="mRNA"/>
</dbReference>
<dbReference type="PIR" id="B84767">
    <property type="entry name" value="B84767"/>
</dbReference>
<dbReference type="RefSeq" id="NP_565803.1">
    <property type="nucleotide sequence ID" value="NM_129084.3"/>
</dbReference>
<dbReference type="SMR" id="O82162"/>
<dbReference type="FunCoup" id="O82162">
    <property type="interactions" value="1186"/>
</dbReference>
<dbReference type="IntAct" id="O82162">
    <property type="interactions" value="1"/>
</dbReference>
<dbReference type="STRING" id="3702.O82162"/>
<dbReference type="PaxDb" id="3702-AT2G35320.1"/>
<dbReference type="ProteomicsDB" id="221821"/>
<dbReference type="EnsemblPlants" id="AT2G35320.1">
    <property type="protein sequence ID" value="AT2G35320.1"/>
    <property type="gene ID" value="AT2G35320"/>
</dbReference>
<dbReference type="GeneID" id="818099"/>
<dbReference type="Gramene" id="AT2G35320.1">
    <property type="protein sequence ID" value="AT2G35320.1"/>
    <property type="gene ID" value="AT2G35320"/>
</dbReference>
<dbReference type="KEGG" id="ath:AT2G35320"/>
<dbReference type="Araport" id="AT2G35320"/>
<dbReference type="TAIR" id="AT2G35320">
    <property type="gene designation" value="EYA"/>
</dbReference>
<dbReference type="eggNOG" id="KOG3107">
    <property type="taxonomic scope" value="Eukaryota"/>
</dbReference>
<dbReference type="HOGENOM" id="CLU_051936_0_0_1"/>
<dbReference type="InParanoid" id="O82162"/>
<dbReference type="OMA" id="MWENHIL"/>
<dbReference type="OrthoDB" id="167668at2759"/>
<dbReference type="PhylomeDB" id="O82162"/>
<dbReference type="PRO" id="PR:O82162"/>
<dbReference type="Proteomes" id="UP000006548">
    <property type="component" value="Chromosome 2"/>
</dbReference>
<dbReference type="ExpressionAtlas" id="O82162">
    <property type="expression patterns" value="baseline and differential"/>
</dbReference>
<dbReference type="GO" id="GO:0046872">
    <property type="term" value="F:metal ion binding"/>
    <property type="evidence" value="ECO:0007669"/>
    <property type="project" value="UniProtKB-KW"/>
</dbReference>
<dbReference type="GO" id="GO:0030946">
    <property type="term" value="F:protein tyrosine phosphatase activity, metal-dependent"/>
    <property type="evidence" value="ECO:0000314"/>
    <property type="project" value="UniProtKB"/>
</dbReference>
<dbReference type="GO" id="GO:0006470">
    <property type="term" value="P:protein dephosphorylation"/>
    <property type="evidence" value="ECO:0000304"/>
    <property type="project" value="TAIR"/>
</dbReference>
<dbReference type="FunFam" id="3.40.50.12350:FF:000003">
    <property type="entry name" value="Eyes absent homolog"/>
    <property type="match status" value="1"/>
</dbReference>
<dbReference type="Gene3D" id="3.40.50.12350">
    <property type="match status" value="1"/>
</dbReference>
<dbReference type="InterPro" id="IPR028472">
    <property type="entry name" value="EYA"/>
</dbReference>
<dbReference type="InterPro" id="IPR006545">
    <property type="entry name" value="EYA_dom"/>
</dbReference>
<dbReference type="InterPro" id="IPR038102">
    <property type="entry name" value="EYA_dom_sf"/>
</dbReference>
<dbReference type="InterPro" id="IPR036412">
    <property type="entry name" value="HAD-like_sf"/>
</dbReference>
<dbReference type="NCBIfam" id="TIGR01658">
    <property type="entry name" value="EYA-cons_domain"/>
    <property type="match status" value="1"/>
</dbReference>
<dbReference type="PANTHER" id="PTHR10190:SF16">
    <property type="entry name" value="DEVELOPMENTAL PROTEIN EYES ABSENT"/>
    <property type="match status" value="1"/>
</dbReference>
<dbReference type="PANTHER" id="PTHR10190">
    <property type="entry name" value="EYES ABSENT"/>
    <property type="match status" value="1"/>
</dbReference>
<dbReference type="SUPFAM" id="SSF56784">
    <property type="entry name" value="HAD-like"/>
    <property type="match status" value="1"/>
</dbReference>
<feature type="chain" id="PRO_0000443993" description="Protein phosphatase EYA">
    <location>
        <begin position="1"/>
        <end position="307"/>
    </location>
</feature>
<feature type="region of interest" description="Necessary for optimum phosphatase activity" evidence="1">
    <location>
        <begin position="1"/>
        <end position="15"/>
    </location>
</feature>
<feature type="active site" description="Nucleophile" evidence="5">
    <location>
        <position position="25"/>
    </location>
</feature>
<feature type="active site" description="Proton donor" evidence="5">
    <location>
        <position position="27"/>
    </location>
</feature>
<feature type="binding site" evidence="5">
    <location>
        <position position="25"/>
    </location>
    <ligand>
        <name>Mg(2+)</name>
        <dbReference type="ChEBI" id="CHEBI:18420"/>
    </ligand>
</feature>
<feature type="binding site" evidence="5">
    <location>
        <position position="27"/>
    </location>
    <ligand>
        <name>Mg(2+)</name>
        <dbReference type="ChEBI" id="CHEBI:18420"/>
    </ligand>
</feature>
<feature type="binding site" evidence="5">
    <location>
        <position position="253"/>
    </location>
    <ligand>
        <name>Mg(2+)</name>
        <dbReference type="ChEBI" id="CHEBI:18420"/>
    </ligand>
</feature>
<feature type="mutagenesis site" description="Reduces phosphatase activity 2-fold." evidence="1">
    <location>
        <begin position="1"/>
        <end position="15"/>
    </location>
</feature>
<feature type="mutagenesis site" description="Abolishes phosphatase activity." evidence="1">
    <original>D</original>
    <variation>C</variation>
    <variation>E</variation>
    <variation>N</variation>
    <location>
        <position position="25"/>
    </location>
</feature>
<feature type="mutagenesis site" description="Reduces phosphatase activity 30-fold." evidence="1">
    <original>D</original>
    <variation>A</variation>
    <variation>N</variation>
    <location>
        <position position="27"/>
    </location>
</feature>
<feature type="mutagenesis site" description="Reduces phosphatase activity 45-fold." evidence="1">
    <original>T</original>
    <variation>A</variation>
    <location>
        <position position="29"/>
    </location>
</feature>
<feature type="mutagenesis site" description="Reduces phosphatase activity 55-fold." evidence="1">
    <original>T</original>
    <variation>A</variation>
    <location>
        <position position="197"/>
    </location>
</feature>
<feature type="mutagenesis site" description="Reduces phosphatase activity 30-fold." evidence="1">
    <original>G</original>
    <variation>A</variation>
    <location>
        <position position="252"/>
    </location>
</feature>
<feature type="mutagenesis site" description="Reduces phosphatase activity 25-fold." evidence="1">
    <original>D</original>
    <variation>N</variation>
    <location>
        <position position="253"/>
    </location>
</feature>
<feature type="mutagenesis site" description="Reduces phosphatase activity 45-fold." evidence="1">
    <original>E</original>
    <variation>Q</variation>
    <location>
        <position position="257"/>
    </location>
</feature>
<feature type="sequence conflict" description="In Ref. 4; AAM65149." evidence="4" ref="4">
    <original>D</original>
    <variation>E</variation>
    <location>
        <position position="87"/>
    </location>
</feature>
<feature type="sequence conflict" description="In Ref. 4; AAM65149." evidence="4" ref="4">
    <original>P</original>
    <variation>Q</variation>
    <location>
        <position position="137"/>
    </location>
</feature>
<comment type="function">
    <text evidence="1 2">Possesses phosphatase activity toward para-nitrophenyl phosphate (pNPP) in vitro (PubMed:15641802). Possesses phosphatase activity toward several phosphotyrosine-containing peptides in vitro, with low peptide substrate specificity (PubMed:18759246).</text>
</comment>
<comment type="catalytic activity">
    <reaction evidence="2">
        <text>O-phospho-L-tyrosyl-[protein] + H2O = L-tyrosyl-[protein] + phosphate</text>
        <dbReference type="Rhea" id="RHEA:10684"/>
        <dbReference type="Rhea" id="RHEA-COMP:10136"/>
        <dbReference type="Rhea" id="RHEA-COMP:20101"/>
        <dbReference type="ChEBI" id="CHEBI:15377"/>
        <dbReference type="ChEBI" id="CHEBI:43474"/>
        <dbReference type="ChEBI" id="CHEBI:46858"/>
        <dbReference type="ChEBI" id="CHEBI:61978"/>
        <dbReference type="EC" id="3.1.3.48"/>
    </reaction>
</comment>
<comment type="cofactor">
    <cofactor evidence="1">
        <name>Mg(2+)</name>
        <dbReference type="ChEBI" id="CHEBI:18420"/>
    </cofactor>
    <text evidence="1">Possesses phosphatase activity in presence of Mn(2+), Co(2+), Ni(2+) or Zn(2+). No phosphatase activity in presence Ca(2+).</text>
</comment>
<comment type="activity regulation">
    <text evidence="1">Inhibited by EDTA.</text>
</comment>
<comment type="biophysicochemical properties">
    <kinetics>
        <KM>0.73 mM for para-nitrophenyl phosphate (at pH 5.5)</KM>
    </kinetics>
    <phDependence>
        <text evidence="1">Optimum pH is 5.5.</text>
    </phDependence>
</comment>
<comment type="interaction">
    <interactant intactId="EBI-25523010">
        <id>O82162</id>
    </interactant>
    <interactant intactId="EBI-15199331">
        <id>Q9SJM4</id>
        <label>GPL3</label>
    </interactant>
    <organismsDiffer>false</organismsDiffer>
    <experiments>3</experiments>
</comment>
<comment type="similarity">
    <text evidence="4">Belongs to the HAD-like hydrolase superfamily. EYA family.</text>
</comment>
<accession>O82162</accession>
<accession>Q8LAU3</accession>
<accession>Q93W85</accession>